<name>HELQ_DROME</name>
<sequence length="1051" mass="117332">MANKHNLCKKRSLDLSEESTSESHAKRQCTENLFWPEGEDDDSFFSNAHLEDLLDGRKEELFGTQATTSTNKMTQSGSDDGLGLFADTSFPSAQSVPPNSASKPDEASAPTDKHQIDLADEENADKLFKKINLNDLSIAEMEDIFHGADDFSDPMVQNTQLFLDAMTFKKPKTPEKLLAPLKDDSMSFISKSVIEGLVQGTQYVTCEELKNQSLLDPVNWETQAFADFEKNNQDIDKFPSKGEFYGLPDKVKKMILEHKGINSLYEWQDECLNLPAIRQRKNLIYALPTSGGKTLVAEILMLRELLCRERNVLFILPYVSIVQEKVSAMSPFAIDLDFIVEEYTAGKGKCPPQPRRKRRSLFIASIEKGAVLMDSLIDVQRPHEIGLVVVDELHLIGEKGRGATLEAFLTKVMFLNANIQIVGMSATIGNLSEISSFLNADVYTRGFRPVELKEYIKCGPDLLEINSAGQTLEEIFVPSRSVEYNYSEAVKRADPDHLAGLISECAPEHCCLVFCPSRKNCENVALLLSRIVPKHKFFEHRRSEKLDLMDALDKMCGILSPVLAKTLPYGIAYHHSGLTTDERKYIETAYRFGVVTVICCTSTLAAGVNLPAKRVIIRAPYVGQEFLTLCKYKQMVGRAGRAGLGEAGESILIAQSKDNLLVGQMLFSPMDKALSSLDQNEAVGLQSLILSVVGLNLAECRRDLNRLVNSTLLSVQAKSLEVAVNEIVLRILREMFKNKVLQLAEPQAKSKINSSDIITSQDVSQANRPAGDRRLLIGQSTPFKLTNIGRAAFKAGIDYKRANAIHKELKQAQQQLILTNYLHLLYLVVCFNSNERGDELFPADASILFGVYTSLPLDSQAMFKQLGFTEAHAARLFKTQSVQGPLSLQLNRLYKVLILADILNLLPIPSVASKYNVERGTLQHLISQSTAAASAIVRLCEELEEFWCYKPLFERILHKMDRCGTFELEPLMELPAVKINRARQLYAAGFQTIGDIARVRPSHLVQSLEHMPLRVATEIVSAAKIILMKKLDHLEEETENLKDCLKTSDKN</sequence>
<reference key="1">
    <citation type="journal article" date="2000" name="Science">
        <title>The genome sequence of Drosophila melanogaster.</title>
        <authorList>
            <person name="Adams M.D."/>
            <person name="Celniker S.E."/>
            <person name="Holt R.A."/>
            <person name="Evans C.A."/>
            <person name="Gocayne J.D."/>
            <person name="Amanatides P.G."/>
            <person name="Scherer S.E."/>
            <person name="Li P.W."/>
            <person name="Hoskins R.A."/>
            <person name="Galle R.F."/>
            <person name="George R.A."/>
            <person name="Lewis S.E."/>
            <person name="Richards S."/>
            <person name="Ashburner M."/>
            <person name="Henderson S.N."/>
            <person name="Sutton G.G."/>
            <person name="Wortman J.R."/>
            <person name="Yandell M.D."/>
            <person name="Zhang Q."/>
            <person name="Chen L.X."/>
            <person name="Brandon R.C."/>
            <person name="Rogers Y.-H.C."/>
            <person name="Blazej R.G."/>
            <person name="Champe M."/>
            <person name="Pfeiffer B.D."/>
            <person name="Wan K.H."/>
            <person name="Doyle C."/>
            <person name="Baxter E.G."/>
            <person name="Helt G."/>
            <person name="Nelson C.R."/>
            <person name="Miklos G.L.G."/>
            <person name="Abril J.F."/>
            <person name="Agbayani A."/>
            <person name="An H.-J."/>
            <person name="Andrews-Pfannkoch C."/>
            <person name="Baldwin D."/>
            <person name="Ballew R.M."/>
            <person name="Basu A."/>
            <person name="Baxendale J."/>
            <person name="Bayraktaroglu L."/>
            <person name="Beasley E.M."/>
            <person name="Beeson K.Y."/>
            <person name="Benos P.V."/>
            <person name="Berman B.P."/>
            <person name="Bhandari D."/>
            <person name="Bolshakov S."/>
            <person name="Borkova D."/>
            <person name="Botchan M.R."/>
            <person name="Bouck J."/>
            <person name="Brokstein P."/>
            <person name="Brottier P."/>
            <person name="Burtis K.C."/>
            <person name="Busam D.A."/>
            <person name="Butler H."/>
            <person name="Cadieu E."/>
            <person name="Center A."/>
            <person name="Chandra I."/>
            <person name="Cherry J.M."/>
            <person name="Cawley S."/>
            <person name="Dahlke C."/>
            <person name="Davenport L.B."/>
            <person name="Davies P."/>
            <person name="de Pablos B."/>
            <person name="Delcher A."/>
            <person name="Deng Z."/>
            <person name="Mays A.D."/>
            <person name="Dew I."/>
            <person name="Dietz S.M."/>
            <person name="Dodson K."/>
            <person name="Doup L.E."/>
            <person name="Downes M."/>
            <person name="Dugan-Rocha S."/>
            <person name="Dunkov B.C."/>
            <person name="Dunn P."/>
            <person name="Durbin K.J."/>
            <person name="Evangelista C.C."/>
            <person name="Ferraz C."/>
            <person name="Ferriera S."/>
            <person name="Fleischmann W."/>
            <person name="Fosler C."/>
            <person name="Gabrielian A.E."/>
            <person name="Garg N.S."/>
            <person name="Gelbart W.M."/>
            <person name="Glasser K."/>
            <person name="Glodek A."/>
            <person name="Gong F."/>
            <person name="Gorrell J.H."/>
            <person name="Gu Z."/>
            <person name="Guan P."/>
            <person name="Harris M."/>
            <person name="Harris N.L."/>
            <person name="Harvey D.A."/>
            <person name="Heiman T.J."/>
            <person name="Hernandez J.R."/>
            <person name="Houck J."/>
            <person name="Hostin D."/>
            <person name="Houston K.A."/>
            <person name="Howland T.J."/>
            <person name="Wei M.-H."/>
            <person name="Ibegwam C."/>
            <person name="Jalali M."/>
            <person name="Kalush F."/>
            <person name="Karpen G.H."/>
            <person name="Ke Z."/>
            <person name="Kennison J.A."/>
            <person name="Ketchum K.A."/>
            <person name="Kimmel B.E."/>
            <person name="Kodira C.D."/>
            <person name="Kraft C.L."/>
            <person name="Kravitz S."/>
            <person name="Kulp D."/>
            <person name="Lai Z."/>
            <person name="Lasko P."/>
            <person name="Lei Y."/>
            <person name="Levitsky A.A."/>
            <person name="Li J.H."/>
            <person name="Li Z."/>
            <person name="Liang Y."/>
            <person name="Lin X."/>
            <person name="Liu X."/>
            <person name="Mattei B."/>
            <person name="McIntosh T.C."/>
            <person name="McLeod M.P."/>
            <person name="McPherson D."/>
            <person name="Merkulov G."/>
            <person name="Milshina N.V."/>
            <person name="Mobarry C."/>
            <person name="Morris J."/>
            <person name="Moshrefi A."/>
            <person name="Mount S.M."/>
            <person name="Moy M."/>
            <person name="Murphy B."/>
            <person name="Murphy L."/>
            <person name="Muzny D.M."/>
            <person name="Nelson D.L."/>
            <person name="Nelson D.R."/>
            <person name="Nelson K.A."/>
            <person name="Nixon K."/>
            <person name="Nusskern D.R."/>
            <person name="Pacleb J.M."/>
            <person name="Palazzolo M."/>
            <person name="Pittman G.S."/>
            <person name="Pan S."/>
            <person name="Pollard J."/>
            <person name="Puri V."/>
            <person name="Reese M.G."/>
            <person name="Reinert K."/>
            <person name="Remington K."/>
            <person name="Saunders R.D.C."/>
            <person name="Scheeler F."/>
            <person name="Shen H."/>
            <person name="Shue B.C."/>
            <person name="Siden-Kiamos I."/>
            <person name="Simpson M."/>
            <person name="Skupski M.P."/>
            <person name="Smith T.J."/>
            <person name="Spier E."/>
            <person name="Spradling A.C."/>
            <person name="Stapleton M."/>
            <person name="Strong R."/>
            <person name="Sun E."/>
            <person name="Svirskas R."/>
            <person name="Tector C."/>
            <person name="Turner R."/>
            <person name="Venter E."/>
            <person name="Wang A.H."/>
            <person name="Wang X."/>
            <person name="Wang Z.-Y."/>
            <person name="Wassarman D.A."/>
            <person name="Weinstock G.M."/>
            <person name="Weissenbach J."/>
            <person name="Williams S.M."/>
            <person name="Woodage T."/>
            <person name="Worley K.C."/>
            <person name="Wu D."/>
            <person name="Yang S."/>
            <person name="Yao Q.A."/>
            <person name="Ye J."/>
            <person name="Yeh R.-F."/>
            <person name="Zaveri J.S."/>
            <person name="Zhan M."/>
            <person name="Zhang G."/>
            <person name="Zhao Q."/>
            <person name="Zheng L."/>
            <person name="Zheng X.H."/>
            <person name="Zhong F.N."/>
            <person name="Zhong W."/>
            <person name="Zhou X."/>
            <person name="Zhu S.C."/>
            <person name="Zhu X."/>
            <person name="Smith H.O."/>
            <person name="Gibbs R.A."/>
            <person name="Myers E.W."/>
            <person name="Rubin G.M."/>
            <person name="Venter J.C."/>
        </authorList>
    </citation>
    <scope>NUCLEOTIDE SEQUENCE [LARGE SCALE GENOMIC DNA]</scope>
    <source>
        <strain>Berkeley</strain>
    </source>
</reference>
<reference key="2">
    <citation type="journal article" date="2002" name="Genome Biol.">
        <title>Annotation of the Drosophila melanogaster euchromatic genome: a systematic review.</title>
        <authorList>
            <person name="Misra S."/>
            <person name="Crosby M.A."/>
            <person name="Mungall C.J."/>
            <person name="Matthews B.B."/>
            <person name="Campbell K.S."/>
            <person name="Hradecky P."/>
            <person name="Huang Y."/>
            <person name="Kaminker J.S."/>
            <person name="Millburn G.H."/>
            <person name="Prochnik S.E."/>
            <person name="Smith C.D."/>
            <person name="Tupy J.L."/>
            <person name="Whitfield E.J."/>
            <person name="Bayraktaroglu L."/>
            <person name="Berman B.P."/>
            <person name="Bettencourt B.R."/>
            <person name="Celniker S.E."/>
            <person name="de Grey A.D.N.J."/>
            <person name="Drysdale R.A."/>
            <person name="Harris N.L."/>
            <person name="Richter J."/>
            <person name="Russo S."/>
            <person name="Schroeder A.J."/>
            <person name="Shu S.Q."/>
            <person name="Stapleton M."/>
            <person name="Yamada C."/>
            <person name="Ashburner M."/>
            <person name="Gelbart W.M."/>
            <person name="Rubin G.M."/>
            <person name="Lewis S.E."/>
        </authorList>
    </citation>
    <scope>GENOME REANNOTATION</scope>
    <source>
        <strain>Berkeley</strain>
    </source>
</reference>
<reference key="3">
    <citation type="submission" date="2006-06" db="EMBL/GenBank/DDBJ databases">
        <authorList>
            <person name="Stapleton M."/>
            <person name="Carlson J."/>
            <person name="Chavez C."/>
            <person name="Frise E."/>
            <person name="George R."/>
            <person name="Pacleb J."/>
            <person name="Park S."/>
            <person name="Wan K."/>
            <person name="Yu C."/>
            <person name="Celniker S."/>
        </authorList>
    </citation>
    <scope>NUCLEOTIDE SEQUENCE [LARGE SCALE MRNA]</scope>
    <source>
        <strain>Berkeley</strain>
        <tissue>Testis</tissue>
    </source>
</reference>
<reference key="4">
    <citation type="journal article" date="1997" name="Development">
        <title>Oocyte determination and the origin of polarity in Drosophila: the role of the spindle genes.</title>
        <authorList>
            <person name="Gonzalez-Reyes A."/>
            <person name="Elliott H."/>
            <person name="St Johnston D."/>
        </authorList>
    </citation>
    <scope>DISRUPTION PHENOTYPE</scope>
</reference>
<reference key="5">
    <citation type="journal article" date="2006" name="Genetics">
        <title>Drosophila mus301/spindle-C encodes a helicase with an essential role in double-strand DNA break repair and meiotic progression.</title>
        <authorList>
            <person name="McCaffrey R."/>
            <person name="St Johnston D."/>
            <person name="Gonzalez-Reyes A."/>
        </authorList>
    </citation>
    <scope>FUNCTION</scope>
    <scope>DISRUPTION PHENOTYPE</scope>
    <scope>MUTAGENESIS OF TYR-455; GLY-637; MET-665 AND GLN-811</scope>
</reference>
<keyword id="KW-0067">ATP-binding</keyword>
<keyword id="KW-0158">Chromosome</keyword>
<keyword id="KW-0227">DNA damage</keyword>
<keyword id="KW-0234">DNA repair</keyword>
<keyword id="KW-0238">DNA-binding</keyword>
<keyword id="KW-0347">Helicase</keyword>
<keyword id="KW-0378">Hydrolase</keyword>
<keyword id="KW-0413">Isomerase</keyword>
<keyword id="KW-0547">Nucleotide-binding</keyword>
<keyword id="KW-0539">Nucleus</keyword>
<keyword id="KW-1185">Reference proteome</keyword>
<proteinExistence type="evidence at protein level"/>
<gene>
    <name evidence="8 11" type="primary">mus301</name>
    <name evidence="9" type="synonym">spnC</name>
    <name evidence="11" type="ORF">CG7972</name>
</gene>
<comment type="function">
    <text evidence="1 6">Single-stranded 3'-5' DNA helicase that plays a key role in homology-driven double-strand break (DSB) repair (PubMed:16888338). Involved in different DSB repair mechanisms that are guided by annealing of extensive stretches of complementary bases at break ends, such as microhomology-mediated end-joining (MMEJ), single-strand annealing (SSA) or synthesis-dependent strand annealing (SDSA) (By similarity).</text>
</comment>
<comment type="catalytic activity">
    <reaction evidence="2">
        <text>Couples ATP hydrolysis with the unwinding of duplex DNA by translocating in the 3'-5' direction.</text>
        <dbReference type="EC" id="5.6.2.4"/>
    </reaction>
</comment>
<comment type="catalytic activity">
    <reaction evidence="2">
        <text>ATP + H2O = ADP + phosphate + H(+)</text>
        <dbReference type="Rhea" id="RHEA:13065"/>
        <dbReference type="ChEBI" id="CHEBI:15377"/>
        <dbReference type="ChEBI" id="CHEBI:15378"/>
        <dbReference type="ChEBI" id="CHEBI:30616"/>
        <dbReference type="ChEBI" id="CHEBI:43474"/>
        <dbReference type="ChEBI" id="CHEBI:456216"/>
        <dbReference type="EC" id="5.6.2.4"/>
    </reaction>
</comment>
<comment type="subcellular location">
    <subcellularLocation>
        <location evidence="2">Nucleus</location>
    </subcellularLocation>
    <subcellularLocation>
        <location evidence="2">Chromosome</location>
    </subcellularLocation>
    <text evidence="2">Localizes to sites of DNA damage.</text>
</comment>
<comment type="disruption phenotype">
    <text evidence="6 7">Impaired meiosis, leading to maternal mutants with eggshell defects (PubMed:16888338, PubMed:9362456). Mutant females produce ventralized egg shells, with phenotypes ranging from fused dorsal appendages to fully ventralized eggs with no dorsal appendages (PubMed:16888338). Mutant flies are hypersensitive to chemical mutagens (PubMed:16888338).</text>
</comment>
<comment type="similarity">
    <text evidence="10">Belongs to the helicase family. SKI2 subfamily.</text>
</comment>
<dbReference type="EC" id="5.6.2.4" evidence="2"/>
<dbReference type="EMBL" id="AE014296">
    <property type="protein sequence ID" value="AAF50481.1"/>
    <property type="molecule type" value="Genomic_DNA"/>
</dbReference>
<dbReference type="EMBL" id="BT011090">
    <property type="protein sequence ID" value="AAR82756.2"/>
    <property type="molecule type" value="mRNA"/>
</dbReference>
<dbReference type="RefSeq" id="NP_648178.1">
    <property type="nucleotide sequence ID" value="NM_139921.4"/>
</dbReference>
<dbReference type="SMR" id="Q9VSE2"/>
<dbReference type="FunCoup" id="Q9VSE2">
    <property type="interactions" value="1297"/>
</dbReference>
<dbReference type="IntAct" id="Q9VSE2">
    <property type="interactions" value="4"/>
</dbReference>
<dbReference type="STRING" id="7227.FBpp0076412"/>
<dbReference type="PaxDb" id="7227-FBpp0076412"/>
<dbReference type="EnsemblMetazoa" id="FBtr0076689">
    <property type="protein sequence ID" value="FBpp0076412"/>
    <property type="gene ID" value="FBgn0002899"/>
</dbReference>
<dbReference type="GeneID" id="38905"/>
<dbReference type="KEGG" id="dme:Dmel_CG7972"/>
<dbReference type="UCSC" id="CG7972-RA">
    <property type="organism name" value="d. melanogaster"/>
</dbReference>
<dbReference type="AGR" id="FB:FBgn0002899"/>
<dbReference type="CTD" id="38905"/>
<dbReference type="FlyBase" id="FBgn0002899">
    <property type="gene designation" value="mus301"/>
</dbReference>
<dbReference type="VEuPathDB" id="VectorBase:FBgn0002899"/>
<dbReference type="eggNOG" id="KOG0950">
    <property type="taxonomic scope" value="Eukaryota"/>
</dbReference>
<dbReference type="GeneTree" id="ENSGT00940000157350"/>
<dbReference type="HOGENOM" id="CLU_006553_0_0_1"/>
<dbReference type="InParanoid" id="Q9VSE2"/>
<dbReference type="OMA" id="MFLNANI"/>
<dbReference type="OrthoDB" id="2320933at2759"/>
<dbReference type="PhylomeDB" id="Q9VSE2"/>
<dbReference type="BioGRID-ORCS" id="38905">
    <property type="hits" value="0 hits in 1 CRISPR screen"/>
</dbReference>
<dbReference type="GenomeRNAi" id="38905"/>
<dbReference type="PRO" id="PR:Q9VSE2"/>
<dbReference type="Proteomes" id="UP000000803">
    <property type="component" value="Chromosome 3L"/>
</dbReference>
<dbReference type="Bgee" id="FBgn0002899">
    <property type="expression patterns" value="Expressed in oocyte and 15 other cell types or tissues"/>
</dbReference>
<dbReference type="GO" id="GO:0005694">
    <property type="term" value="C:chromosome"/>
    <property type="evidence" value="ECO:0007669"/>
    <property type="project" value="UniProtKB-SubCell"/>
</dbReference>
<dbReference type="GO" id="GO:0005634">
    <property type="term" value="C:nucleus"/>
    <property type="evidence" value="ECO:0007669"/>
    <property type="project" value="UniProtKB-SubCell"/>
</dbReference>
<dbReference type="GO" id="GO:0005524">
    <property type="term" value="F:ATP binding"/>
    <property type="evidence" value="ECO:0007669"/>
    <property type="project" value="UniProtKB-KW"/>
</dbReference>
<dbReference type="GO" id="GO:0003677">
    <property type="term" value="F:DNA binding"/>
    <property type="evidence" value="ECO:0007669"/>
    <property type="project" value="UniProtKB-KW"/>
</dbReference>
<dbReference type="GO" id="GO:0016787">
    <property type="term" value="F:hydrolase activity"/>
    <property type="evidence" value="ECO:0007669"/>
    <property type="project" value="UniProtKB-KW"/>
</dbReference>
<dbReference type="GO" id="GO:1990518">
    <property type="term" value="F:single-stranded 3'-5' DNA helicase activity"/>
    <property type="evidence" value="ECO:0000250"/>
    <property type="project" value="FlyBase"/>
</dbReference>
<dbReference type="GO" id="GO:0045003">
    <property type="term" value="P:double-strand break repair via synthesis-dependent strand annealing"/>
    <property type="evidence" value="ECO:0000315"/>
    <property type="project" value="FlyBase"/>
</dbReference>
<dbReference type="GO" id="GO:0016321">
    <property type="term" value="P:female meiosis chromosome segregation"/>
    <property type="evidence" value="ECO:0000315"/>
    <property type="project" value="FlyBase"/>
</dbReference>
<dbReference type="GO" id="GO:0007294">
    <property type="term" value="P:germarium-derived oocyte fate determination"/>
    <property type="evidence" value="ECO:0000315"/>
    <property type="project" value="FlyBase"/>
</dbReference>
<dbReference type="GO" id="GO:0008298">
    <property type="term" value="P:intracellular mRNA localization"/>
    <property type="evidence" value="ECO:0000315"/>
    <property type="project" value="FlyBase"/>
</dbReference>
<dbReference type="GO" id="GO:0030717">
    <property type="term" value="P:oocyte karyosome formation"/>
    <property type="evidence" value="ECO:0000315"/>
    <property type="project" value="FlyBase"/>
</dbReference>
<dbReference type="GO" id="GO:0048477">
    <property type="term" value="P:oogenesis"/>
    <property type="evidence" value="ECO:0000316"/>
    <property type="project" value="FlyBase"/>
</dbReference>
<dbReference type="GO" id="GO:0009949">
    <property type="term" value="P:polarity specification of anterior/posterior axis"/>
    <property type="evidence" value="ECO:0000315"/>
    <property type="project" value="FlyBase"/>
</dbReference>
<dbReference type="GO" id="GO:0009951">
    <property type="term" value="P:polarity specification of dorsal/ventral axis"/>
    <property type="evidence" value="ECO:0000315"/>
    <property type="project" value="FlyBase"/>
</dbReference>
<dbReference type="GO" id="GO:0006417">
    <property type="term" value="P:regulation of translation"/>
    <property type="evidence" value="ECO:0000304"/>
    <property type="project" value="FlyBase"/>
</dbReference>
<dbReference type="CDD" id="cd18026">
    <property type="entry name" value="DEXHc_POLQ-like"/>
    <property type="match status" value="1"/>
</dbReference>
<dbReference type="CDD" id="cd18795">
    <property type="entry name" value="SF2_C_Ski2"/>
    <property type="match status" value="1"/>
</dbReference>
<dbReference type="FunFam" id="1.10.3380.20:FF:000006">
    <property type="entry name" value="helicase POLQ-like"/>
    <property type="match status" value="1"/>
</dbReference>
<dbReference type="FunFam" id="3.40.50.300:FF:000813">
    <property type="entry name" value="helicase POLQ-like isoform X1"/>
    <property type="match status" value="1"/>
</dbReference>
<dbReference type="Gene3D" id="1.10.3380.20">
    <property type="match status" value="1"/>
</dbReference>
<dbReference type="Gene3D" id="3.40.50.300">
    <property type="entry name" value="P-loop containing nucleotide triphosphate hydrolases"/>
    <property type="match status" value="2"/>
</dbReference>
<dbReference type="InterPro" id="IPR011545">
    <property type="entry name" value="DEAD/DEAH_box_helicase_dom"/>
</dbReference>
<dbReference type="InterPro" id="IPR050474">
    <property type="entry name" value="Hel308_SKI2-like"/>
</dbReference>
<dbReference type="InterPro" id="IPR014001">
    <property type="entry name" value="Helicase_ATP-bd"/>
</dbReference>
<dbReference type="InterPro" id="IPR001650">
    <property type="entry name" value="Helicase_C-like"/>
</dbReference>
<dbReference type="InterPro" id="IPR046931">
    <property type="entry name" value="HTH_61"/>
</dbReference>
<dbReference type="InterPro" id="IPR027417">
    <property type="entry name" value="P-loop_NTPase"/>
</dbReference>
<dbReference type="InterPro" id="IPR048960">
    <property type="entry name" value="POLQ-like_helical"/>
</dbReference>
<dbReference type="PANTHER" id="PTHR47961">
    <property type="entry name" value="DNA POLYMERASE THETA, PUTATIVE (AFU_ORTHOLOGUE AFUA_1G05260)-RELATED"/>
    <property type="match status" value="1"/>
</dbReference>
<dbReference type="PANTHER" id="PTHR47961:SF12">
    <property type="entry name" value="HELICASE POLQ-LIKE"/>
    <property type="match status" value="1"/>
</dbReference>
<dbReference type="Pfam" id="PF00270">
    <property type="entry name" value="DEAD"/>
    <property type="match status" value="1"/>
</dbReference>
<dbReference type="Pfam" id="PF00271">
    <property type="entry name" value="Helicase_C"/>
    <property type="match status" value="1"/>
</dbReference>
<dbReference type="Pfam" id="PF20470">
    <property type="entry name" value="HTH_61"/>
    <property type="match status" value="1"/>
</dbReference>
<dbReference type="Pfam" id="PF21099">
    <property type="entry name" value="POLQ_helical"/>
    <property type="match status" value="1"/>
</dbReference>
<dbReference type="SMART" id="SM00487">
    <property type="entry name" value="DEXDc"/>
    <property type="match status" value="1"/>
</dbReference>
<dbReference type="SMART" id="SM00490">
    <property type="entry name" value="HELICc"/>
    <property type="match status" value="1"/>
</dbReference>
<dbReference type="SUPFAM" id="SSF52540">
    <property type="entry name" value="P-loop containing nucleoside triphosphate hydrolases"/>
    <property type="match status" value="1"/>
</dbReference>
<dbReference type="SUPFAM" id="SSF158702">
    <property type="entry name" value="Sec63 N-terminal domain-like"/>
    <property type="match status" value="1"/>
</dbReference>
<dbReference type="PROSITE" id="PS51192">
    <property type="entry name" value="HELICASE_ATP_BIND_1"/>
    <property type="match status" value="1"/>
</dbReference>
<dbReference type="PROSITE" id="PS51194">
    <property type="entry name" value="HELICASE_CTER"/>
    <property type="match status" value="1"/>
</dbReference>
<feature type="chain" id="PRO_0000455411" description="Helicase POLQ-like">
    <location>
        <begin position="1"/>
        <end position="1051"/>
    </location>
</feature>
<feature type="domain" description="Helicase ATP-binding" evidence="3">
    <location>
        <begin position="274"/>
        <end position="446"/>
    </location>
</feature>
<feature type="domain" description="Helicase C-terminal" evidence="4">
    <location>
        <begin position="497"/>
        <end position="689"/>
    </location>
</feature>
<feature type="region of interest" description="Disordered" evidence="5">
    <location>
        <begin position="1"/>
        <end position="28"/>
    </location>
</feature>
<feature type="region of interest" description="Disordered" evidence="5">
    <location>
        <begin position="61"/>
        <end position="112"/>
    </location>
</feature>
<feature type="short sequence motif" description="DEAH box" evidence="3">
    <location>
        <begin position="391"/>
        <end position="394"/>
    </location>
</feature>
<feature type="compositionally biased region" description="Basic residues" evidence="5">
    <location>
        <begin position="1"/>
        <end position="10"/>
    </location>
</feature>
<feature type="compositionally biased region" description="Polar residues" evidence="5">
    <location>
        <begin position="64"/>
        <end position="78"/>
    </location>
</feature>
<feature type="compositionally biased region" description="Polar residues" evidence="5">
    <location>
        <begin position="89"/>
        <end position="102"/>
    </location>
</feature>
<feature type="compositionally biased region" description="Basic and acidic residues" evidence="5">
    <location>
        <begin position="103"/>
        <end position="112"/>
    </location>
</feature>
<feature type="binding site" evidence="3">
    <location>
        <begin position="287"/>
        <end position="294"/>
    </location>
    <ligand>
        <name>ATP</name>
        <dbReference type="ChEBI" id="CHEBI:30616"/>
    </ligand>
</feature>
<feature type="mutagenesis site" description="In mus308-2255 mutant; mutant females produce ventralized egg shells; when associated with H-811." evidence="6">
    <original>Y</original>
    <variation>D</variation>
    <location>
        <position position="455"/>
    </location>
</feature>
<feature type="mutagenesis site" description="In mus308-094 mutant; mutant females produce ventralized egg shells." evidence="6">
    <original>G</original>
    <variation>Q</variation>
    <location>
        <position position="637"/>
    </location>
</feature>
<feature type="mutagenesis site" description="In mus308-660 mutant; mutant females produce ventralized egg shells." evidence="6">
    <original>M</original>
    <variation>K</variation>
    <location>
        <position position="665"/>
    </location>
</feature>
<feature type="mutagenesis site" description="In mus308-2255 mutant; mutant females produce ventralized egg shells; when associated with D-455." evidence="6">
    <original>Q</original>
    <variation>H</variation>
    <location>
        <position position="811"/>
    </location>
</feature>
<protein>
    <recommendedName>
        <fullName evidence="10">Helicase POLQ-like</fullName>
        <ecNumber evidence="2">5.6.2.4</ecNumber>
    </recommendedName>
    <alternativeName>
        <fullName evidence="8">Mutagen-sensitive protein 301</fullName>
    </alternativeName>
    <alternativeName>
        <fullName evidence="9">Protein spindle-C</fullName>
        <shortName evidence="9">Spindle-C</shortName>
    </alternativeName>
</protein>
<organism>
    <name type="scientific">Drosophila melanogaster</name>
    <name type="common">Fruit fly</name>
    <dbReference type="NCBI Taxonomy" id="7227"/>
    <lineage>
        <taxon>Eukaryota</taxon>
        <taxon>Metazoa</taxon>
        <taxon>Ecdysozoa</taxon>
        <taxon>Arthropoda</taxon>
        <taxon>Hexapoda</taxon>
        <taxon>Insecta</taxon>
        <taxon>Pterygota</taxon>
        <taxon>Neoptera</taxon>
        <taxon>Endopterygota</taxon>
        <taxon>Diptera</taxon>
        <taxon>Brachycera</taxon>
        <taxon>Muscomorpha</taxon>
        <taxon>Ephydroidea</taxon>
        <taxon>Drosophilidae</taxon>
        <taxon>Drosophila</taxon>
        <taxon>Sophophora</taxon>
    </lineage>
</organism>
<evidence type="ECO:0000250" key="1">
    <source>
        <dbReference type="UniProtKB" id="H2KY86"/>
    </source>
</evidence>
<evidence type="ECO:0000250" key="2">
    <source>
        <dbReference type="UniProtKB" id="Q8TDG4"/>
    </source>
</evidence>
<evidence type="ECO:0000255" key="3">
    <source>
        <dbReference type="PROSITE-ProRule" id="PRU00541"/>
    </source>
</evidence>
<evidence type="ECO:0000255" key="4">
    <source>
        <dbReference type="PROSITE-ProRule" id="PRU00542"/>
    </source>
</evidence>
<evidence type="ECO:0000256" key="5">
    <source>
        <dbReference type="SAM" id="MobiDB-lite"/>
    </source>
</evidence>
<evidence type="ECO:0000269" key="6">
    <source>
    </source>
</evidence>
<evidence type="ECO:0000269" key="7">
    <source>
    </source>
</evidence>
<evidence type="ECO:0000303" key="8">
    <source>
    </source>
</evidence>
<evidence type="ECO:0000303" key="9">
    <source>
    </source>
</evidence>
<evidence type="ECO:0000305" key="10"/>
<evidence type="ECO:0000312" key="11">
    <source>
        <dbReference type="FlyBase" id="FBgn0002899"/>
    </source>
</evidence>
<accession>Q9VSE2</accession>
<accession>Q6NP41</accession>